<gene>
    <name evidence="1" type="primary">nfo</name>
    <name type="ordered locus">Mmc1_1936</name>
</gene>
<protein>
    <recommendedName>
        <fullName evidence="1">Probable endonuclease 4</fullName>
        <ecNumber evidence="1">3.1.21.2</ecNumber>
    </recommendedName>
    <alternativeName>
        <fullName evidence="1">Endodeoxyribonuclease IV</fullName>
    </alternativeName>
    <alternativeName>
        <fullName evidence="1">Endonuclease IV</fullName>
    </alternativeName>
</protein>
<accession>A0L901</accession>
<name>END4_MAGMM</name>
<evidence type="ECO:0000255" key="1">
    <source>
        <dbReference type="HAMAP-Rule" id="MF_00152"/>
    </source>
</evidence>
<dbReference type="EC" id="3.1.21.2" evidence="1"/>
<dbReference type="EMBL" id="CP000471">
    <property type="protein sequence ID" value="ABK44444.1"/>
    <property type="molecule type" value="Genomic_DNA"/>
</dbReference>
<dbReference type="RefSeq" id="WP_011713588.1">
    <property type="nucleotide sequence ID" value="NC_008576.1"/>
</dbReference>
<dbReference type="SMR" id="A0L901"/>
<dbReference type="STRING" id="156889.Mmc1_1936"/>
<dbReference type="KEGG" id="mgm:Mmc1_1936"/>
<dbReference type="eggNOG" id="COG0648">
    <property type="taxonomic scope" value="Bacteria"/>
</dbReference>
<dbReference type="HOGENOM" id="CLU_025885_0_4_5"/>
<dbReference type="OrthoDB" id="9805666at2"/>
<dbReference type="Proteomes" id="UP000002586">
    <property type="component" value="Chromosome"/>
</dbReference>
<dbReference type="GO" id="GO:0008833">
    <property type="term" value="F:deoxyribonuclease IV (phage-T4-induced) activity"/>
    <property type="evidence" value="ECO:0007669"/>
    <property type="project" value="UniProtKB-UniRule"/>
</dbReference>
<dbReference type="GO" id="GO:0003677">
    <property type="term" value="F:DNA binding"/>
    <property type="evidence" value="ECO:0007669"/>
    <property type="project" value="InterPro"/>
</dbReference>
<dbReference type="GO" id="GO:0003906">
    <property type="term" value="F:DNA-(apurinic or apyrimidinic site) endonuclease activity"/>
    <property type="evidence" value="ECO:0007669"/>
    <property type="project" value="TreeGrafter"/>
</dbReference>
<dbReference type="GO" id="GO:0008081">
    <property type="term" value="F:phosphoric diester hydrolase activity"/>
    <property type="evidence" value="ECO:0007669"/>
    <property type="project" value="TreeGrafter"/>
</dbReference>
<dbReference type="GO" id="GO:0008270">
    <property type="term" value="F:zinc ion binding"/>
    <property type="evidence" value="ECO:0007669"/>
    <property type="project" value="UniProtKB-UniRule"/>
</dbReference>
<dbReference type="GO" id="GO:0006284">
    <property type="term" value="P:base-excision repair"/>
    <property type="evidence" value="ECO:0007669"/>
    <property type="project" value="TreeGrafter"/>
</dbReference>
<dbReference type="CDD" id="cd00019">
    <property type="entry name" value="AP2Ec"/>
    <property type="match status" value="1"/>
</dbReference>
<dbReference type="FunFam" id="3.20.20.150:FF:000001">
    <property type="entry name" value="Probable endonuclease 4"/>
    <property type="match status" value="1"/>
</dbReference>
<dbReference type="Gene3D" id="3.20.20.150">
    <property type="entry name" value="Divalent-metal-dependent TIM barrel enzymes"/>
    <property type="match status" value="1"/>
</dbReference>
<dbReference type="HAMAP" id="MF_00152">
    <property type="entry name" value="Nfo"/>
    <property type="match status" value="1"/>
</dbReference>
<dbReference type="InterPro" id="IPR001719">
    <property type="entry name" value="AP_endonuc_2"/>
</dbReference>
<dbReference type="InterPro" id="IPR018246">
    <property type="entry name" value="AP_endonuc_F2_Zn_BS"/>
</dbReference>
<dbReference type="InterPro" id="IPR036237">
    <property type="entry name" value="Xyl_isomerase-like_sf"/>
</dbReference>
<dbReference type="InterPro" id="IPR013022">
    <property type="entry name" value="Xyl_isomerase-like_TIM-brl"/>
</dbReference>
<dbReference type="NCBIfam" id="TIGR00587">
    <property type="entry name" value="nfo"/>
    <property type="match status" value="1"/>
</dbReference>
<dbReference type="NCBIfam" id="NF002199">
    <property type="entry name" value="PRK01060.1-4"/>
    <property type="match status" value="1"/>
</dbReference>
<dbReference type="PANTHER" id="PTHR21445:SF0">
    <property type="entry name" value="APURINIC-APYRIMIDINIC ENDONUCLEASE"/>
    <property type="match status" value="1"/>
</dbReference>
<dbReference type="PANTHER" id="PTHR21445">
    <property type="entry name" value="ENDONUCLEASE IV ENDODEOXYRIBONUCLEASE IV"/>
    <property type="match status" value="1"/>
</dbReference>
<dbReference type="Pfam" id="PF01261">
    <property type="entry name" value="AP_endonuc_2"/>
    <property type="match status" value="1"/>
</dbReference>
<dbReference type="SMART" id="SM00518">
    <property type="entry name" value="AP2Ec"/>
    <property type="match status" value="1"/>
</dbReference>
<dbReference type="SUPFAM" id="SSF51658">
    <property type="entry name" value="Xylose isomerase-like"/>
    <property type="match status" value="1"/>
</dbReference>
<dbReference type="PROSITE" id="PS00729">
    <property type="entry name" value="AP_NUCLEASE_F2_1"/>
    <property type="match status" value="1"/>
</dbReference>
<dbReference type="PROSITE" id="PS00730">
    <property type="entry name" value="AP_NUCLEASE_F2_2"/>
    <property type="match status" value="1"/>
</dbReference>
<dbReference type="PROSITE" id="PS00731">
    <property type="entry name" value="AP_NUCLEASE_F2_3"/>
    <property type="match status" value="1"/>
</dbReference>
<dbReference type="PROSITE" id="PS51432">
    <property type="entry name" value="AP_NUCLEASE_F2_4"/>
    <property type="match status" value="1"/>
</dbReference>
<feature type="chain" id="PRO_1000011313" description="Probable endonuclease 4">
    <location>
        <begin position="1"/>
        <end position="282"/>
    </location>
</feature>
<feature type="binding site" evidence="1">
    <location>
        <position position="69"/>
    </location>
    <ligand>
        <name>Zn(2+)</name>
        <dbReference type="ChEBI" id="CHEBI:29105"/>
        <label>1</label>
    </ligand>
</feature>
<feature type="binding site" evidence="1">
    <location>
        <position position="109"/>
    </location>
    <ligand>
        <name>Zn(2+)</name>
        <dbReference type="ChEBI" id="CHEBI:29105"/>
        <label>1</label>
    </ligand>
</feature>
<feature type="binding site" evidence="1">
    <location>
        <position position="145"/>
    </location>
    <ligand>
        <name>Zn(2+)</name>
        <dbReference type="ChEBI" id="CHEBI:29105"/>
        <label>1</label>
    </ligand>
</feature>
<feature type="binding site" evidence="1">
    <location>
        <position position="145"/>
    </location>
    <ligand>
        <name>Zn(2+)</name>
        <dbReference type="ChEBI" id="CHEBI:29105"/>
        <label>2</label>
    </ligand>
</feature>
<feature type="binding site" evidence="1">
    <location>
        <position position="179"/>
    </location>
    <ligand>
        <name>Zn(2+)</name>
        <dbReference type="ChEBI" id="CHEBI:29105"/>
        <label>2</label>
    </ligand>
</feature>
<feature type="binding site" evidence="1">
    <location>
        <position position="182"/>
    </location>
    <ligand>
        <name>Zn(2+)</name>
        <dbReference type="ChEBI" id="CHEBI:29105"/>
        <label>3</label>
    </ligand>
</feature>
<feature type="binding site" evidence="1">
    <location>
        <position position="216"/>
    </location>
    <ligand>
        <name>Zn(2+)</name>
        <dbReference type="ChEBI" id="CHEBI:29105"/>
        <label>2</label>
    </ligand>
</feature>
<feature type="binding site" evidence="1">
    <location>
        <position position="229"/>
    </location>
    <ligand>
        <name>Zn(2+)</name>
        <dbReference type="ChEBI" id="CHEBI:29105"/>
        <label>3</label>
    </ligand>
</feature>
<feature type="binding site" evidence="1">
    <location>
        <position position="231"/>
    </location>
    <ligand>
        <name>Zn(2+)</name>
        <dbReference type="ChEBI" id="CHEBI:29105"/>
        <label>3</label>
    </ligand>
</feature>
<feature type="binding site" evidence="1">
    <location>
        <position position="261"/>
    </location>
    <ligand>
        <name>Zn(2+)</name>
        <dbReference type="ChEBI" id="CHEBI:29105"/>
        <label>2</label>
    </ligand>
</feature>
<proteinExistence type="inferred from homology"/>
<keyword id="KW-0227">DNA damage</keyword>
<keyword id="KW-0234">DNA repair</keyword>
<keyword id="KW-0255">Endonuclease</keyword>
<keyword id="KW-0378">Hydrolase</keyword>
<keyword id="KW-0479">Metal-binding</keyword>
<keyword id="KW-0540">Nuclease</keyword>
<keyword id="KW-1185">Reference proteome</keyword>
<keyword id="KW-0862">Zinc</keyword>
<reference key="1">
    <citation type="journal article" date="2009" name="Appl. Environ. Microbiol.">
        <title>Complete genome sequence of the chemolithoautotrophic marine magnetotactic coccus strain MC-1.</title>
        <authorList>
            <person name="Schubbe S."/>
            <person name="Williams T.J."/>
            <person name="Xie G."/>
            <person name="Kiss H.E."/>
            <person name="Brettin T.S."/>
            <person name="Martinez D."/>
            <person name="Ross C.A."/>
            <person name="Schuler D."/>
            <person name="Cox B.L."/>
            <person name="Nealson K.H."/>
            <person name="Bazylinski D.A."/>
        </authorList>
    </citation>
    <scope>NUCLEOTIDE SEQUENCE [LARGE SCALE GENOMIC DNA]</scope>
    <source>
        <strain>ATCC BAA-1437 / JCM 17883 / MC-1</strain>
    </source>
</reference>
<comment type="function">
    <text evidence="1">Endonuclease IV plays a role in DNA repair. It cleaves phosphodiester bonds at apurinic or apyrimidinic (AP) sites, generating a 3'-hydroxyl group and a 5'-terminal sugar phosphate.</text>
</comment>
<comment type="catalytic activity">
    <reaction evidence="1">
        <text>Endonucleolytic cleavage to 5'-phosphooligonucleotide end-products.</text>
        <dbReference type="EC" id="3.1.21.2"/>
    </reaction>
</comment>
<comment type="cofactor">
    <cofactor evidence="1">
        <name>Zn(2+)</name>
        <dbReference type="ChEBI" id="CHEBI:29105"/>
    </cofactor>
    <text evidence="1">Binds 3 Zn(2+) ions.</text>
</comment>
<comment type="similarity">
    <text evidence="1">Belongs to the AP endonuclease 2 family.</text>
</comment>
<organism>
    <name type="scientific">Magnetococcus marinus (strain ATCC BAA-1437 / JCM 17883 / MC-1)</name>
    <dbReference type="NCBI Taxonomy" id="156889"/>
    <lineage>
        <taxon>Bacteria</taxon>
        <taxon>Pseudomonadati</taxon>
        <taxon>Pseudomonadota</taxon>
        <taxon>Alphaproteobacteria</taxon>
        <taxon>Magnetococcales</taxon>
        <taxon>Magnetococcaceae</taxon>
        <taxon>Magnetococcus</taxon>
    </lineage>
</organism>
<sequence length="282" mass="31212">MKYVGAHVSISGGVENAPQNAQAIGAKAFALFTKNQRQWTAKPITDAQIELFKRRMDEYGFVPEQTLPHDSYLINLGNPDAAKRQQSLDAFVDEMQRCAQLGLPLLNFHPGSHLRQVDEDQCLDLIVDSLNRALERTSGVVAVIENTAGQGSNLGYRFEHLAHIIAGVEDKSRIGVCLDTCHTFVAGYDLRTAEAYAKTMDTFEQVVGFSYLRGMHLNDSKPDLGAKVDRHHSLGAGKLGLETFRLIMNDGRLDGIPLILETIDESLWAQEIALLYAMQESP</sequence>